<accession>Q59E83</accession>
<accession>Q9N324</accession>
<keyword id="KW-0025">Alternative splicing</keyword>
<keyword id="KW-1003">Cell membrane</keyword>
<keyword id="KW-1015">Disulfide bond</keyword>
<keyword id="KW-0297">G-protein coupled receptor</keyword>
<keyword id="KW-0325">Glycoprotein</keyword>
<keyword id="KW-0472">Membrane</keyword>
<keyword id="KW-0675">Receptor</keyword>
<keyword id="KW-1185">Reference proteome</keyword>
<keyword id="KW-0807">Transducer</keyword>
<keyword id="KW-0812">Transmembrane</keyword>
<keyword id="KW-1133">Transmembrane helix</keyword>
<reference evidence="9" key="1">
    <citation type="journal article" date="1998" name="Science">
        <title>Genome sequence of the nematode C. elegans: a platform for investigating biology.</title>
        <authorList>
            <consortium name="The C. elegans sequencing consortium"/>
        </authorList>
    </citation>
    <scope>NUCLEOTIDE SEQUENCE [LARGE SCALE GENOMIC DNA]</scope>
    <source>
        <strain evidence="9">Bristol N2</strain>
    </source>
</reference>
<reference evidence="8" key="2">
    <citation type="journal article" date="2006" name="Peptides">
        <title>FMRFamide related peptide ligands activate the Caenorhabditis elegans orphan GPCR Y59H11AL.1.</title>
        <authorList>
            <person name="Mertens I."/>
            <person name="Clinckspoor I."/>
            <person name="Janssen T."/>
            <person name="Nachman R."/>
            <person name="Schoofs L."/>
        </authorList>
    </citation>
    <scope>FUNCTION</scope>
</reference>
<reference evidence="8" key="3">
    <citation type="journal article" date="2017" name="Elife">
        <title>Luqin-like RYamide peptides regulate food-evoked responses in C. elegans.</title>
        <authorList>
            <person name="Ohno H."/>
            <person name="Yoshida M."/>
            <person name="Sato T."/>
            <person name="Kato J."/>
            <person name="Miyazato M."/>
            <person name="Kojima M."/>
            <person name="Ida T."/>
            <person name="Iino Y."/>
        </authorList>
    </citation>
    <scope>FUNCTION</scope>
    <scope>TISSUE SPECIFICITY</scope>
    <scope>DISRUPTION PHENOTYPE</scope>
</reference>
<reference evidence="8" key="4">
    <citation type="journal article" date="2017" name="Nat. Commun.">
        <title>A tachykinin-like neuroendocrine signalling axis couples central serotonin action and nutrient sensing with peripheral lipid metabolism.</title>
        <authorList>
            <person name="Palamiuc L."/>
            <person name="Noble T."/>
            <person name="Witham E."/>
            <person name="Ratanpal H."/>
            <person name="Vaughan M."/>
            <person name="Srinivasan S."/>
        </authorList>
    </citation>
    <scope>FUNCTION</scope>
    <scope>TISSUE SPECIFICITY</scope>
    <scope>DISRUPTION PHENOTYPE</scope>
</reference>
<proteinExistence type="evidence at transcript level"/>
<dbReference type="EMBL" id="BX284604">
    <property type="protein sequence ID" value="CCD64002.1"/>
    <property type="molecule type" value="Genomic_DNA"/>
</dbReference>
<dbReference type="EMBL" id="BX284604">
    <property type="protein sequence ID" value="CCD64003.1"/>
    <property type="molecule type" value="Genomic_DNA"/>
</dbReference>
<dbReference type="RefSeq" id="NP_001023540.1">
    <molecule id="Q59E83-2"/>
    <property type="nucleotide sequence ID" value="NM_001028369.4"/>
</dbReference>
<dbReference type="RefSeq" id="NP_001023541.1">
    <molecule id="Q59E83-1"/>
    <property type="nucleotide sequence ID" value="NM_001028370.5"/>
</dbReference>
<dbReference type="SMR" id="Q59E83"/>
<dbReference type="FunCoup" id="Q59E83">
    <property type="interactions" value="7"/>
</dbReference>
<dbReference type="STRING" id="6239.Y59H11AL.1b.1"/>
<dbReference type="GlyCosmos" id="Q59E83">
    <property type="glycosylation" value="1 site, No reported glycans"/>
</dbReference>
<dbReference type="PaxDb" id="6239-Y59H11AL.1b"/>
<dbReference type="EnsemblMetazoa" id="Y59H11AL.1a.1">
    <molecule id="Q59E83-2"/>
    <property type="protein sequence ID" value="Y59H11AL.1a.1"/>
    <property type="gene ID" value="WBGene00022004"/>
</dbReference>
<dbReference type="EnsemblMetazoa" id="Y59H11AL.1b.1">
    <molecule id="Q59E83-1"/>
    <property type="protein sequence ID" value="Y59H11AL.1b.1"/>
    <property type="gene ID" value="WBGene00022004"/>
</dbReference>
<dbReference type="GeneID" id="190424"/>
<dbReference type="KEGG" id="cel:CELE_Y59H11AL.1"/>
<dbReference type="UCSC" id="Y59H11AL.1a">
    <property type="organism name" value="c. elegans"/>
</dbReference>
<dbReference type="AGR" id="WB:WBGene00022004"/>
<dbReference type="CTD" id="190424"/>
<dbReference type="WormBase" id="Y59H11AL.1a">
    <molecule id="Q59E83-2"/>
    <property type="protein sequence ID" value="CE31260"/>
    <property type="gene ID" value="WBGene00022004"/>
    <property type="gene designation" value="npr-22"/>
</dbReference>
<dbReference type="WormBase" id="Y59H11AL.1b">
    <molecule id="Q59E83-1"/>
    <property type="protein sequence ID" value="CE38456"/>
    <property type="gene ID" value="WBGene00022004"/>
    <property type="gene designation" value="npr-22"/>
</dbReference>
<dbReference type="eggNOG" id="KOG4219">
    <property type="taxonomic scope" value="Eukaryota"/>
</dbReference>
<dbReference type="GeneTree" id="ENSGT00940000165559"/>
<dbReference type="InParanoid" id="Q59E83"/>
<dbReference type="OMA" id="CICFYNI"/>
<dbReference type="OrthoDB" id="9445642at2759"/>
<dbReference type="PhylomeDB" id="Q59E83"/>
<dbReference type="PRO" id="PR:Q59E83"/>
<dbReference type="Proteomes" id="UP000001940">
    <property type="component" value="Chromosome IV"/>
</dbReference>
<dbReference type="Bgee" id="WBGene00022004">
    <property type="expression patterns" value="Expressed in larva and 3 other cell types or tissues"/>
</dbReference>
<dbReference type="GO" id="GO:0005886">
    <property type="term" value="C:plasma membrane"/>
    <property type="evidence" value="ECO:0000318"/>
    <property type="project" value="GO_Central"/>
</dbReference>
<dbReference type="GO" id="GO:0008188">
    <property type="term" value="F:neuropeptide receptor activity"/>
    <property type="evidence" value="ECO:0000314"/>
    <property type="project" value="WormBase"/>
</dbReference>
<dbReference type="GO" id="GO:0008340">
    <property type="term" value="P:determination of adult lifespan"/>
    <property type="evidence" value="ECO:0000314"/>
    <property type="project" value="UniProtKB"/>
</dbReference>
<dbReference type="GO" id="GO:2000252">
    <property type="term" value="P:negative regulation of feeding behavior"/>
    <property type="evidence" value="ECO:0000314"/>
    <property type="project" value="UniProtKB"/>
</dbReference>
<dbReference type="GO" id="GO:0040013">
    <property type="term" value="P:negative regulation of locomotion"/>
    <property type="evidence" value="ECO:0000314"/>
    <property type="project" value="UniProtKB"/>
</dbReference>
<dbReference type="GO" id="GO:0007218">
    <property type="term" value="P:neuropeptide signaling pathway"/>
    <property type="evidence" value="ECO:0000314"/>
    <property type="project" value="WormBase"/>
</dbReference>
<dbReference type="GO" id="GO:1901046">
    <property type="term" value="P:positive regulation of egg-laying behavior"/>
    <property type="evidence" value="ECO:0000314"/>
    <property type="project" value="UniProtKB"/>
</dbReference>
<dbReference type="CDD" id="cd15392">
    <property type="entry name" value="7tmA_PR4-like"/>
    <property type="match status" value="1"/>
</dbReference>
<dbReference type="FunFam" id="1.20.1070.10:FF:000702">
    <property type="entry name" value="Neuropeptide receptor 22"/>
    <property type="match status" value="1"/>
</dbReference>
<dbReference type="Gene3D" id="1.20.1070.10">
    <property type="entry name" value="Rhodopsin 7-helix transmembrane proteins"/>
    <property type="match status" value="1"/>
</dbReference>
<dbReference type="InterPro" id="IPR000276">
    <property type="entry name" value="GPCR_Rhodpsn"/>
</dbReference>
<dbReference type="InterPro" id="IPR017452">
    <property type="entry name" value="GPCR_Rhodpsn_7TM"/>
</dbReference>
<dbReference type="PANTHER" id="PTHR24238">
    <property type="entry name" value="G-PROTEIN COUPLED RECEPTOR"/>
    <property type="match status" value="1"/>
</dbReference>
<dbReference type="PANTHER" id="PTHR24238:SF77">
    <property type="entry name" value="NEUROPEPTIDE RECEPTOR 22"/>
    <property type="match status" value="1"/>
</dbReference>
<dbReference type="Pfam" id="PF00001">
    <property type="entry name" value="7tm_1"/>
    <property type="match status" value="1"/>
</dbReference>
<dbReference type="PRINTS" id="PR00237">
    <property type="entry name" value="GPCRRHODOPSN"/>
</dbReference>
<dbReference type="SUPFAM" id="SSF81321">
    <property type="entry name" value="Family A G protein-coupled receptor-like"/>
    <property type="match status" value="1"/>
</dbReference>
<dbReference type="PROSITE" id="PS00237">
    <property type="entry name" value="G_PROTEIN_RECEP_F1_1"/>
    <property type="match status" value="1"/>
</dbReference>
<dbReference type="PROSITE" id="PS50262">
    <property type="entry name" value="G_PROTEIN_RECEP_F1_2"/>
    <property type="match status" value="1"/>
</dbReference>
<organism evidence="9">
    <name type="scientific">Caenorhabditis elegans</name>
    <dbReference type="NCBI Taxonomy" id="6239"/>
    <lineage>
        <taxon>Eukaryota</taxon>
        <taxon>Metazoa</taxon>
        <taxon>Ecdysozoa</taxon>
        <taxon>Nematoda</taxon>
        <taxon>Chromadorea</taxon>
        <taxon>Rhabditida</taxon>
        <taxon>Rhabditina</taxon>
        <taxon>Rhabditomorpha</taxon>
        <taxon>Rhabditoidea</taxon>
        <taxon>Rhabditidae</taxon>
        <taxon>Peloderinae</taxon>
        <taxon>Caenorhabditis</taxon>
    </lineage>
</organism>
<sequence>MDEGGGIGSSLLSRITTTASEIMMRNEPTTTENPAVQEMNHIYHLTPSMKMLCILFYSILCVCCVYGNVLVILVIVYFKRLRTATNILILNLAVADLLISVFCIPFSYWQVLIYDDQRWLFGSMMCSLLAFLQAMAVFLSAWTLVVISFDRWMAIMFLLTPNIRITRRRALYLVAATWIFSILMALPLLFTTRFFEDQDGLPNCGENWTYFGDSGEQVRKVYSSMVLILQYVVPQAVLIITYTHIGIKMWNSRVPGMQNGATKKMIVDRHESVKKLVPMVILISALFALCWLPLLILINVIPEFYPDINSWGYILYLWWFAHGLAMSHSMVNPIIYFIRNARFREGFCFFSSKLLPCISFKELRLLTDNTSRSFRNRSRFSGVINPTSSDEKPATSLTRYSRSGVLDRQTCRSARFFEARPLVVVRNNSANSLA</sequence>
<comment type="function">
    <text evidence="5 6 7">Receptor for the LURY-1-1 and LURY-1-2 peptides which control food-related processes including feeding, lifespan, egg-laying and roaming behavior (PubMed:28847365). Receptor for flp-7 which stimulates serotonin-induced fat loss (PubMed:28128367). Serotonin induces secretion of flp-7 from neurons and binding to npr-22 which leads to induction of the atgp-1 lipase and subsequent fat loss (PubMed:28128367). Acts in vitro as a receptor for the flp-7 FMRFamide-like neuropeptides TPMQRSSMVRF-amide, SPMQRSSMVRF-amide, SPMERSAMVRF-amide and SPMDRSKMVRF-amide (PubMed:16377032). Also acts in vitro as a receptor for a number of other FMRFamide-like neuropeptides including the flp-1 neuropeptide PNFMRY-amide, the flp-9 neuropeptide KPSFVRF-amide, the flp-11 neuropeptides AMRNALVRF-amide, ASGGMRNALVRF-amide and NGAPQPFVRF-amide, the flp-13 neuropeptides AADGAPLIRF-amide, ASPSAPLIRF-amide, SPSAVPLIRF-amide, SAAAPLIRF-amide and ASSAPLIRF-amide, and the flp-22 neuropeptide SPSAKWMRF-amide (PubMed:16377032). The SPMERSAMVRF-amide neuropeptide from flp-7 acts as the strongest in vitro activator of npr-22 (PubMed:16377032).</text>
</comment>
<comment type="subcellular location">
    <subcellularLocation>
        <location evidence="8">Cell membrane</location>
        <topology evidence="1">Multi-pass membrane protein</topology>
    </subcellularLocation>
</comment>
<comment type="alternative products">
    <event type="alternative splicing"/>
    <isoform>
        <id>Q59E83-1</id>
        <name evidence="11">b</name>
        <sequence type="displayed"/>
    </isoform>
    <isoform>
        <id>Q59E83-2</id>
        <name evidence="10">a</name>
        <sequence type="described" ref="VSP_059252"/>
    </isoform>
</comment>
<comment type="tissue specificity">
    <text evidence="6 7">Expressed in many cells, mainly in the head region, with expression detected in the head muscles, I2 neurons, MC neurons, RIH neuron, AIA neurons, AUA neurons, ASK neurons, ASI neurons, a few B-type motorneurons in the posterior ventral nerve cord, pharyngeal muscles, body wall muscles, the intestine and a few classes of unidentified cells anterior to the nerve ring (PubMed:28847365). Expression in the MC neurons is important to mediate suppression of feeding while expression in the RIH neuron is important for the facilitation of egg-laying (PubMed:28847365). No expression detected in other tissues including hypodermis (PubMed:28128367).</text>
</comment>
<comment type="disruption phenotype">
    <text evidence="6 7">Eggs are retained in the body as normal during starvation but the number of eggs laid during the initial refeeding period is reduced and satiety-induced suppression of pharyngeal pumping is slower than wild-type (PubMed:28847365). Suppression of serotonin-induced body fat loss (PubMed:28128367).</text>
</comment>
<comment type="similarity">
    <text evidence="4">Belongs to the G-protein coupled receptor 1 family.</text>
</comment>
<name>NPR22_CAEEL</name>
<gene>
    <name evidence="11" type="primary">npr-22</name>
    <name evidence="11" type="ORF">Y59H11AL.1</name>
</gene>
<feature type="chain" id="PRO_0000442514" description="Neuropeptide receptor 22">
    <location>
        <begin position="1"/>
        <end position="434"/>
    </location>
</feature>
<feature type="topological domain" description="Extracellular" evidence="8">
    <location>
        <begin position="1"/>
        <end position="55"/>
    </location>
</feature>
<feature type="transmembrane region" description="Helical; Name=1" evidence="1">
    <location>
        <begin position="56"/>
        <end position="76"/>
    </location>
</feature>
<feature type="topological domain" description="Cytoplasmic" evidence="8">
    <location>
        <begin position="77"/>
        <end position="86"/>
    </location>
</feature>
<feature type="transmembrane region" description="Helical; Name=2" evidence="1">
    <location>
        <begin position="87"/>
        <end position="107"/>
    </location>
</feature>
<feature type="topological domain" description="Extracellular" evidence="8">
    <location>
        <begin position="108"/>
        <end position="128"/>
    </location>
</feature>
<feature type="transmembrane region" description="Helical; Name=3" evidence="1">
    <location>
        <begin position="129"/>
        <end position="149"/>
    </location>
</feature>
<feature type="topological domain" description="Cytoplasmic" evidence="8">
    <location>
        <begin position="150"/>
        <end position="169"/>
    </location>
</feature>
<feature type="transmembrane region" description="Helical; Name=4" evidence="1">
    <location>
        <begin position="170"/>
        <end position="190"/>
    </location>
</feature>
<feature type="topological domain" description="Extracellular" evidence="8">
    <location>
        <begin position="191"/>
        <end position="226"/>
    </location>
</feature>
<feature type="transmembrane region" description="Helical; Name=5" evidence="1">
    <location>
        <begin position="227"/>
        <end position="247"/>
    </location>
</feature>
<feature type="topological domain" description="Cytoplasmic" evidence="8">
    <location>
        <begin position="248"/>
        <end position="277"/>
    </location>
</feature>
<feature type="transmembrane region" description="Helical; Name=6" evidence="1">
    <location>
        <begin position="278"/>
        <end position="298"/>
    </location>
</feature>
<feature type="topological domain" description="Extracellular" evidence="8">
    <location>
        <begin position="299"/>
        <end position="310"/>
    </location>
</feature>
<feature type="transmembrane region" description="Helical; Name=7" evidence="1">
    <location>
        <begin position="311"/>
        <end position="331"/>
    </location>
</feature>
<feature type="topological domain" description="Cytoplasmic" evidence="8">
    <location>
        <begin position="332"/>
        <end position="434"/>
    </location>
</feature>
<feature type="glycosylation site" description="N-linked (GlcNAc...) asparagine" evidence="2">
    <location>
        <position position="207"/>
    </location>
</feature>
<feature type="disulfide bond" evidence="3">
    <location>
        <begin position="126"/>
        <end position="204"/>
    </location>
</feature>
<feature type="splice variant" id="VSP_059252" description="In isoform a." evidence="8">
    <original>SFRNRSRFSGVINPTSSDEKPATSLTRYSRSGVLDRQTCRSARFFEARPLVVVRNNSANSLA</original>
    <variation>RHRLRDIHEVESLTGKHVVRHVSSKPDHSSSSETTLPILSRSFSRIIKKIDLPCT</variation>
    <location>
        <begin position="373"/>
        <end position="434"/>
    </location>
</feature>
<evidence type="ECO:0000255" key="1"/>
<evidence type="ECO:0000255" key="2">
    <source>
        <dbReference type="PROSITE-ProRule" id="PRU00498"/>
    </source>
</evidence>
<evidence type="ECO:0000255" key="3">
    <source>
        <dbReference type="PROSITE-ProRule" id="PRU00521"/>
    </source>
</evidence>
<evidence type="ECO:0000255" key="4">
    <source>
        <dbReference type="RuleBase" id="RU000688"/>
    </source>
</evidence>
<evidence type="ECO:0000269" key="5">
    <source>
    </source>
</evidence>
<evidence type="ECO:0000269" key="6">
    <source>
    </source>
</evidence>
<evidence type="ECO:0000269" key="7">
    <source>
    </source>
</evidence>
<evidence type="ECO:0000305" key="8"/>
<evidence type="ECO:0000312" key="9">
    <source>
        <dbReference type="Proteomes" id="UP000001940"/>
    </source>
</evidence>
<evidence type="ECO:0000312" key="10">
    <source>
        <dbReference type="WormBase" id="Y59H11AL.1a"/>
    </source>
</evidence>
<evidence type="ECO:0000312" key="11">
    <source>
        <dbReference type="WormBase" id="Y59H11AL.1b"/>
    </source>
</evidence>
<protein>
    <recommendedName>
        <fullName evidence="8">Neuropeptide receptor 22</fullName>
    </recommendedName>
</protein>